<dbReference type="EC" id="6.1.1.20" evidence="1"/>
<dbReference type="EMBL" id="AM039952">
    <property type="protein sequence ID" value="CAJ24469.1"/>
    <property type="molecule type" value="Genomic_DNA"/>
</dbReference>
<dbReference type="RefSeq" id="WP_011347903.1">
    <property type="nucleotide sequence ID" value="NZ_CP017190.1"/>
</dbReference>
<dbReference type="SMR" id="Q3BRU2"/>
<dbReference type="STRING" id="456327.BJD11_08950"/>
<dbReference type="KEGG" id="xcv:XCV2790"/>
<dbReference type="eggNOG" id="COG0072">
    <property type="taxonomic scope" value="Bacteria"/>
</dbReference>
<dbReference type="eggNOG" id="COG0073">
    <property type="taxonomic scope" value="Bacteria"/>
</dbReference>
<dbReference type="HOGENOM" id="CLU_016891_0_0_6"/>
<dbReference type="Proteomes" id="UP000007069">
    <property type="component" value="Chromosome"/>
</dbReference>
<dbReference type="GO" id="GO:0009328">
    <property type="term" value="C:phenylalanine-tRNA ligase complex"/>
    <property type="evidence" value="ECO:0007669"/>
    <property type="project" value="TreeGrafter"/>
</dbReference>
<dbReference type="GO" id="GO:0005524">
    <property type="term" value="F:ATP binding"/>
    <property type="evidence" value="ECO:0007669"/>
    <property type="project" value="UniProtKB-UniRule"/>
</dbReference>
<dbReference type="GO" id="GO:0000287">
    <property type="term" value="F:magnesium ion binding"/>
    <property type="evidence" value="ECO:0007669"/>
    <property type="project" value="UniProtKB-UniRule"/>
</dbReference>
<dbReference type="GO" id="GO:0004826">
    <property type="term" value="F:phenylalanine-tRNA ligase activity"/>
    <property type="evidence" value="ECO:0007669"/>
    <property type="project" value="UniProtKB-UniRule"/>
</dbReference>
<dbReference type="GO" id="GO:0000049">
    <property type="term" value="F:tRNA binding"/>
    <property type="evidence" value="ECO:0007669"/>
    <property type="project" value="UniProtKB-KW"/>
</dbReference>
<dbReference type="GO" id="GO:0006432">
    <property type="term" value="P:phenylalanyl-tRNA aminoacylation"/>
    <property type="evidence" value="ECO:0007669"/>
    <property type="project" value="UniProtKB-UniRule"/>
</dbReference>
<dbReference type="CDD" id="cd00769">
    <property type="entry name" value="PheRS_beta_core"/>
    <property type="match status" value="1"/>
</dbReference>
<dbReference type="CDD" id="cd02796">
    <property type="entry name" value="tRNA_bind_bactPheRS"/>
    <property type="match status" value="1"/>
</dbReference>
<dbReference type="FunFam" id="2.40.50.140:FF:000045">
    <property type="entry name" value="Phenylalanine--tRNA ligase beta subunit"/>
    <property type="match status" value="1"/>
</dbReference>
<dbReference type="FunFam" id="3.30.56.10:FF:000002">
    <property type="entry name" value="Phenylalanine--tRNA ligase beta subunit"/>
    <property type="match status" value="1"/>
</dbReference>
<dbReference type="FunFam" id="3.30.70.380:FF:000001">
    <property type="entry name" value="Phenylalanine--tRNA ligase beta subunit"/>
    <property type="match status" value="1"/>
</dbReference>
<dbReference type="FunFam" id="3.30.930.10:FF:000022">
    <property type="entry name" value="Phenylalanine--tRNA ligase beta subunit"/>
    <property type="match status" value="1"/>
</dbReference>
<dbReference type="FunFam" id="3.50.40.10:FF:000001">
    <property type="entry name" value="Phenylalanine--tRNA ligase beta subunit"/>
    <property type="match status" value="1"/>
</dbReference>
<dbReference type="Gene3D" id="3.30.56.10">
    <property type="match status" value="2"/>
</dbReference>
<dbReference type="Gene3D" id="3.30.930.10">
    <property type="entry name" value="Bira Bifunctional Protein, Domain 2"/>
    <property type="match status" value="1"/>
</dbReference>
<dbReference type="Gene3D" id="3.30.70.380">
    <property type="entry name" value="Ferrodoxin-fold anticodon-binding domain"/>
    <property type="match status" value="1"/>
</dbReference>
<dbReference type="Gene3D" id="2.40.50.140">
    <property type="entry name" value="Nucleic acid-binding proteins"/>
    <property type="match status" value="1"/>
</dbReference>
<dbReference type="Gene3D" id="3.50.40.10">
    <property type="entry name" value="Phenylalanyl-trna Synthetase, Chain B, domain 3"/>
    <property type="match status" value="1"/>
</dbReference>
<dbReference type="HAMAP" id="MF_00283">
    <property type="entry name" value="Phe_tRNA_synth_beta1"/>
    <property type="match status" value="1"/>
</dbReference>
<dbReference type="InterPro" id="IPR045864">
    <property type="entry name" value="aa-tRNA-synth_II/BPL/LPL"/>
</dbReference>
<dbReference type="InterPro" id="IPR005146">
    <property type="entry name" value="B3/B4_tRNA-bd"/>
</dbReference>
<dbReference type="InterPro" id="IPR009061">
    <property type="entry name" value="DNA-bd_dom_put_sf"/>
</dbReference>
<dbReference type="InterPro" id="IPR005121">
    <property type="entry name" value="Fdx_antiC-bd"/>
</dbReference>
<dbReference type="InterPro" id="IPR036690">
    <property type="entry name" value="Fdx_antiC-bd_sf"/>
</dbReference>
<dbReference type="InterPro" id="IPR012340">
    <property type="entry name" value="NA-bd_OB-fold"/>
</dbReference>
<dbReference type="InterPro" id="IPR045060">
    <property type="entry name" value="Phe-tRNA-ligase_IIc_bsu"/>
</dbReference>
<dbReference type="InterPro" id="IPR004532">
    <property type="entry name" value="Phe-tRNA-ligase_IIc_bsu_bact"/>
</dbReference>
<dbReference type="InterPro" id="IPR020825">
    <property type="entry name" value="Phe-tRNA_synthase-like_B3/B4"/>
</dbReference>
<dbReference type="InterPro" id="IPR041616">
    <property type="entry name" value="PheRS_beta_core"/>
</dbReference>
<dbReference type="InterPro" id="IPR002547">
    <property type="entry name" value="tRNA-bd_dom"/>
</dbReference>
<dbReference type="InterPro" id="IPR033714">
    <property type="entry name" value="tRNA_bind_bactPheRS"/>
</dbReference>
<dbReference type="InterPro" id="IPR005147">
    <property type="entry name" value="tRNA_synthase_B5-dom"/>
</dbReference>
<dbReference type="NCBIfam" id="TIGR00472">
    <property type="entry name" value="pheT_bact"/>
    <property type="match status" value="1"/>
</dbReference>
<dbReference type="NCBIfam" id="NF045760">
    <property type="entry name" value="YtpR"/>
    <property type="match status" value="1"/>
</dbReference>
<dbReference type="PANTHER" id="PTHR10947:SF0">
    <property type="entry name" value="PHENYLALANINE--TRNA LIGASE BETA SUBUNIT"/>
    <property type="match status" value="1"/>
</dbReference>
<dbReference type="PANTHER" id="PTHR10947">
    <property type="entry name" value="PHENYLALANYL-TRNA SYNTHETASE BETA CHAIN AND LEUCINE-RICH REPEAT-CONTAINING PROTEIN 47"/>
    <property type="match status" value="1"/>
</dbReference>
<dbReference type="Pfam" id="PF03483">
    <property type="entry name" value="B3_4"/>
    <property type="match status" value="1"/>
</dbReference>
<dbReference type="Pfam" id="PF03484">
    <property type="entry name" value="B5"/>
    <property type="match status" value="1"/>
</dbReference>
<dbReference type="Pfam" id="PF03147">
    <property type="entry name" value="FDX-ACB"/>
    <property type="match status" value="1"/>
</dbReference>
<dbReference type="Pfam" id="PF01588">
    <property type="entry name" value="tRNA_bind"/>
    <property type="match status" value="1"/>
</dbReference>
<dbReference type="Pfam" id="PF17759">
    <property type="entry name" value="tRNA_synthFbeta"/>
    <property type="match status" value="1"/>
</dbReference>
<dbReference type="SMART" id="SM00873">
    <property type="entry name" value="B3_4"/>
    <property type="match status" value="1"/>
</dbReference>
<dbReference type="SMART" id="SM00874">
    <property type="entry name" value="B5"/>
    <property type="match status" value="1"/>
</dbReference>
<dbReference type="SMART" id="SM00896">
    <property type="entry name" value="FDX-ACB"/>
    <property type="match status" value="1"/>
</dbReference>
<dbReference type="SUPFAM" id="SSF54991">
    <property type="entry name" value="Anticodon-binding domain of PheRS"/>
    <property type="match status" value="1"/>
</dbReference>
<dbReference type="SUPFAM" id="SSF55681">
    <property type="entry name" value="Class II aaRS and biotin synthetases"/>
    <property type="match status" value="1"/>
</dbReference>
<dbReference type="SUPFAM" id="SSF50249">
    <property type="entry name" value="Nucleic acid-binding proteins"/>
    <property type="match status" value="1"/>
</dbReference>
<dbReference type="SUPFAM" id="SSF56037">
    <property type="entry name" value="PheT/TilS domain"/>
    <property type="match status" value="1"/>
</dbReference>
<dbReference type="SUPFAM" id="SSF46955">
    <property type="entry name" value="Putative DNA-binding domain"/>
    <property type="match status" value="1"/>
</dbReference>
<dbReference type="PROSITE" id="PS51483">
    <property type="entry name" value="B5"/>
    <property type="match status" value="1"/>
</dbReference>
<dbReference type="PROSITE" id="PS51447">
    <property type="entry name" value="FDX_ACB"/>
    <property type="match status" value="1"/>
</dbReference>
<dbReference type="PROSITE" id="PS50886">
    <property type="entry name" value="TRBD"/>
    <property type="match status" value="1"/>
</dbReference>
<evidence type="ECO:0000255" key="1">
    <source>
        <dbReference type="HAMAP-Rule" id="MF_00283"/>
    </source>
</evidence>
<feature type="chain" id="PRO_0000232099" description="Phenylalanine--tRNA ligase beta subunit">
    <location>
        <begin position="1"/>
        <end position="792"/>
    </location>
</feature>
<feature type="domain" description="tRNA-binding" evidence="1">
    <location>
        <begin position="39"/>
        <end position="147"/>
    </location>
</feature>
<feature type="domain" description="B5" evidence="1">
    <location>
        <begin position="400"/>
        <end position="475"/>
    </location>
</feature>
<feature type="domain" description="FDX-ACB" evidence="1">
    <location>
        <begin position="698"/>
        <end position="791"/>
    </location>
</feature>
<feature type="binding site" evidence="1">
    <location>
        <position position="453"/>
    </location>
    <ligand>
        <name>Mg(2+)</name>
        <dbReference type="ChEBI" id="CHEBI:18420"/>
        <note>shared with alpha subunit</note>
    </ligand>
</feature>
<feature type="binding site" evidence="1">
    <location>
        <position position="459"/>
    </location>
    <ligand>
        <name>Mg(2+)</name>
        <dbReference type="ChEBI" id="CHEBI:18420"/>
        <note>shared with alpha subunit</note>
    </ligand>
</feature>
<feature type="binding site" evidence="1">
    <location>
        <position position="462"/>
    </location>
    <ligand>
        <name>Mg(2+)</name>
        <dbReference type="ChEBI" id="CHEBI:18420"/>
        <note>shared with alpha subunit</note>
    </ligand>
</feature>
<feature type="binding site" evidence="1">
    <location>
        <position position="463"/>
    </location>
    <ligand>
        <name>Mg(2+)</name>
        <dbReference type="ChEBI" id="CHEBI:18420"/>
        <note>shared with alpha subunit</note>
    </ligand>
</feature>
<comment type="catalytic activity">
    <reaction evidence="1">
        <text>tRNA(Phe) + L-phenylalanine + ATP = L-phenylalanyl-tRNA(Phe) + AMP + diphosphate + H(+)</text>
        <dbReference type="Rhea" id="RHEA:19413"/>
        <dbReference type="Rhea" id="RHEA-COMP:9668"/>
        <dbReference type="Rhea" id="RHEA-COMP:9699"/>
        <dbReference type="ChEBI" id="CHEBI:15378"/>
        <dbReference type="ChEBI" id="CHEBI:30616"/>
        <dbReference type="ChEBI" id="CHEBI:33019"/>
        <dbReference type="ChEBI" id="CHEBI:58095"/>
        <dbReference type="ChEBI" id="CHEBI:78442"/>
        <dbReference type="ChEBI" id="CHEBI:78531"/>
        <dbReference type="ChEBI" id="CHEBI:456215"/>
        <dbReference type="EC" id="6.1.1.20"/>
    </reaction>
</comment>
<comment type="cofactor">
    <cofactor evidence="1">
        <name>Mg(2+)</name>
        <dbReference type="ChEBI" id="CHEBI:18420"/>
    </cofactor>
    <text evidence="1">Binds 2 magnesium ions per tetramer.</text>
</comment>
<comment type="subunit">
    <text evidence="1">Tetramer of two alpha and two beta subunits.</text>
</comment>
<comment type="subcellular location">
    <subcellularLocation>
        <location evidence="1">Cytoplasm</location>
    </subcellularLocation>
</comment>
<comment type="similarity">
    <text evidence="1">Belongs to the phenylalanyl-tRNA synthetase beta subunit family. Type 1 subfamily.</text>
</comment>
<accession>Q3BRU2</accession>
<gene>
    <name evidence="1" type="primary">pheT</name>
    <name type="ordered locus">XCV2790</name>
</gene>
<reference key="1">
    <citation type="journal article" date="2005" name="J. Bacteriol.">
        <title>Insights into genome plasticity and pathogenicity of the plant pathogenic Bacterium Xanthomonas campestris pv. vesicatoria revealed by the complete genome sequence.</title>
        <authorList>
            <person name="Thieme F."/>
            <person name="Koebnik R."/>
            <person name="Bekel T."/>
            <person name="Berger C."/>
            <person name="Boch J."/>
            <person name="Buettner D."/>
            <person name="Caldana C."/>
            <person name="Gaigalat L."/>
            <person name="Goesmann A."/>
            <person name="Kay S."/>
            <person name="Kirchner O."/>
            <person name="Lanz C."/>
            <person name="Linke B."/>
            <person name="McHardy A.C."/>
            <person name="Meyer F."/>
            <person name="Mittenhuber G."/>
            <person name="Nies D.H."/>
            <person name="Niesbach-Kloesgen U."/>
            <person name="Patschkowski T."/>
            <person name="Rueckert C."/>
            <person name="Rupp O."/>
            <person name="Schneiker S."/>
            <person name="Schuster S.C."/>
            <person name="Vorhoelter F.J."/>
            <person name="Weber E."/>
            <person name="Puehler A."/>
            <person name="Bonas U."/>
            <person name="Bartels D."/>
            <person name="Kaiser O."/>
        </authorList>
    </citation>
    <scope>NUCLEOTIDE SEQUENCE [LARGE SCALE GENOMIC DNA]</scope>
    <source>
        <strain>85-10</strain>
    </source>
</reference>
<proteinExistence type="inferred from homology"/>
<organism>
    <name type="scientific">Xanthomonas euvesicatoria pv. vesicatoria (strain 85-10)</name>
    <name type="common">Xanthomonas campestris pv. vesicatoria</name>
    <dbReference type="NCBI Taxonomy" id="316273"/>
    <lineage>
        <taxon>Bacteria</taxon>
        <taxon>Pseudomonadati</taxon>
        <taxon>Pseudomonadota</taxon>
        <taxon>Gammaproteobacteria</taxon>
        <taxon>Lysobacterales</taxon>
        <taxon>Lysobacteraceae</taxon>
        <taxon>Xanthomonas</taxon>
    </lineage>
</organism>
<keyword id="KW-0030">Aminoacyl-tRNA synthetase</keyword>
<keyword id="KW-0067">ATP-binding</keyword>
<keyword id="KW-0963">Cytoplasm</keyword>
<keyword id="KW-0436">Ligase</keyword>
<keyword id="KW-0460">Magnesium</keyword>
<keyword id="KW-0479">Metal-binding</keyword>
<keyword id="KW-0547">Nucleotide-binding</keyword>
<keyword id="KW-0648">Protein biosynthesis</keyword>
<keyword id="KW-0694">RNA-binding</keyword>
<keyword id="KW-0820">tRNA-binding</keyword>
<protein>
    <recommendedName>
        <fullName evidence="1">Phenylalanine--tRNA ligase beta subunit</fullName>
        <ecNumber evidence="1">6.1.1.20</ecNumber>
    </recommendedName>
    <alternativeName>
        <fullName evidence="1">Phenylalanyl-tRNA synthetase beta subunit</fullName>
        <shortName evidence="1">PheRS</shortName>
    </alternativeName>
</protein>
<name>SYFB_XANE5</name>
<sequence length="792" mass="85123">MKFSENWLRSHVPIQATRDELAATLTAIGLEVEEVTPLGESLGQVVVARIVEAVRHPEADRLQVCSVDAGQGELLQIVCGAPNARAGLVAPLALVGAKIGELTITAAKLRGVASNGMLCSAKELGLDSDASGLFELPDDAPVGQALAEYLGLPDASIEIKLTPNRADCFSVRGIAFDVAAACASEVVAFDAGMVAPVSTRTLAVELDAGKDAPRYCGRVIEGIDPSAKTPVWLAERLRRSGVRPVSLLVDITQYVMLELGQPMHAFDLDTLQGPIGVRHSRVGEQLVLLDGRQVTLDESFLTITDAGRPVALAGLMGGLDTRVTDTTRNVFLESAYFAPEAIMGRGRKLGLHTDAGHRFERGVDPALPPQAIEVATRLVLELAGGTPGPVVHAQLPEHLPQPARIRLRRARIARVLGIQIDDADVVRMLRALGMHVEAVAEGWEVMAPSRRFDIAIEEDLIEELARIHGYDRVPTTLPGGASRIAMPSETQLDELSVRRQLVARELQETINYAFVDAALLERWQLTEGLVPLANPLSAELAIMRLRLLPGLVATLGRNAARQAGRVRLFELGKVFAAAADAGAAPGESQHVAAAVCGDALALQWGEPARKVDFHDLKGDLMALAAASGAQLEFQPSTQPFGHPGRSADIYRNGVCIGWIGQVHPRLAKALDIDVDVIAFELQLMPLVQRALPRAGELSRFPSVRRDLAFLVPDEVSWAAVSASVRTTVGPLLREVQLFDRYVGQGVEPGFKSLAMGLILQDNSRTLTDRDVDAVVTDVVAVIEREHRARIRS</sequence>